<comment type="function">
    <text evidence="1">Catalyzes amidations at positions B, D, E, and G on adenosylcobyrinic A,C-diamide. NH(2) groups are provided by glutamine, and one molecule of ATP is hydrogenolyzed for each amidation.</text>
</comment>
<comment type="pathway">
    <text evidence="1">Cofactor biosynthesis; adenosylcobalamin biosynthesis.</text>
</comment>
<comment type="similarity">
    <text evidence="1">Belongs to the CobB/CobQ family. CobQ subfamily.</text>
</comment>
<protein>
    <recommendedName>
        <fullName evidence="1">Probable cobyric acid synthase</fullName>
    </recommendedName>
</protein>
<proteinExistence type="inferred from homology"/>
<accession>C5A475</accession>
<dbReference type="EMBL" id="CP001398">
    <property type="protein sequence ID" value="ACS33037.1"/>
    <property type="molecule type" value="Genomic_DNA"/>
</dbReference>
<dbReference type="RefSeq" id="WP_015858155.1">
    <property type="nucleotide sequence ID" value="NC_012804.1"/>
</dbReference>
<dbReference type="SMR" id="C5A475"/>
<dbReference type="STRING" id="593117.TGAM_0535"/>
<dbReference type="PaxDb" id="593117-TGAM_0535"/>
<dbReference type="GeneID" id="7987403"/>
<dbReference type="KEGG" id="tga:TGAM_0535"/>
<dbReference type="PATRIC" id="fig|593117.10.peg.531"/>
<dbReference type="eggNOG" id="arCOG00105">
    <property type="taxonomic scope" value="Archaea"/>
</dbReference>
<dbReference type="HOGENOM" id="CLU_019250_2_2_2"/>
<dbReference type="OrthoDB" id="53136at2157"/>
<dbReference type="UniPathway" id="UPA00148"/>
<dbReference type="Proteomes" id="UP000001488">
    <property type="component" value="Chromosome"/>
</dbReference>
<dbReference type="GO" id="GO:0015420">
    <property type="term" value="F:ABC-type vitamin B12 transporter activity"/>
    <property type="evidence" value="ECO:0007669"/>
    <property type="project" value="UniProtKB-UniRule"/>
</dbReference>
<dbReference type="GO" id="GO:0003824">
    <property type="term" value="F:catalytic activity"/>
    <property type="evidence" value="ECO:0007669"/>
    <property type="project" value="InterPro"/>
</dbReference>
<dbReference type="GO" id="GO:0009236">
    <property type="term" value="P:cobalamin biosynthetic process"/>
    <property type="evidence" value="ECO:0007669"/>
    <property type="project" value="UniProtKB-UniRule"/>
</dbReference>
<dbReference type="CDD" id="cd05389">
    <property type="entry name" value="CobQ_N"/>
    <property type="match status" value="1"/>
</dbReference>
<dbReference type="CDD" id="cd01750">
    <property type="entry name" value="GATase1_CobQ"/>
    <property type="match status" value="1"/>
</dbReference>
<dbReference type="Gene3D" id="3.40.50.880">
    <property type="match status" value="1"/>
</dbReference>
<dbReference type="Gene3D" id="3.40.50.300">
    <property type="entry name" value="P-loop containing nucleotide triphosphate hydrolases"/>
    <property type="match status" value="1"/>
</dbReference>
<dbReference type="HAMAP" id="MF_00028">
    <property type="entry name" value="CobQ"/>
    <property type="match status" value="1"/>
</dbReference>
<dbReference type="InterPro" id="IPR029062">
    <property type="entry name" value="Class_I_gatase-like"/>
</dbReference>
<dbReference type="InterPro" id="IPR002586">
    <property type="entry name" value="CobQ/CobB/MinD/ParA_Nub-bd_dom"/>
</dbReference>
<dbReference type="InterPro" id="IPR033949">
    <property type="entry name" value="CobQ_GATase1"/>
</dbReference>
<dbReference type="InterPro" id="IPR047045">
    <property type="entry name" value="CobQ_N"/>
</dbReference>
<dbReference type="InterPro" id="IPR004459">
    <property type="entry name" value="CobQ_synth"/>
</dbReference>
<dbReference type="InterPro" id="IPR011698">
    <property type="entry name" value="GATase_3"/>
</dbReference>
<dbReference type="InterPro" id="IPR027417">
    <property type="entry name" value="P-loop_NTPase"/>
</dbReference>
<dbReference type="NCBIfam" id="TIGR00313">
    <property type="entry name" value="cobQ"/>
    <property type="match status" value="1"/>
</dbReference>
<dbReference type="NCBIfam" id="NF001989">
    <property type="entry name" value="PRK00784.1"/>
    <property type="match status" value="1"/>
</dbReference>
<dbReference type="PANTHER" id="PTHR21343:SF1">
    <property type="entry name" value="COBYRIC ACID SYNTHASE"/>
    <property type="match status" value="1"/>
</dbReference>
<dbReference type="PANTHER" id="PTHR21343">
    <property type="entry name" value="DETHIOBIOTIN SYNTHETASE"/>
    <property type="match status" value="1"/>
</dbReference>
<dbReference type="Pfam" id="PF01656">
    <property type="entry name" value="CbiA"/>
    <property type="match status" value="1"/>
</dbReference>
<dbReference type="Pfam" id="PF07685">
    <property type="entry name" value="GATase_3"/>
    <property type="match status" value="1"/>
</dbReference>
<dbReference type="SUPFAM" id="SSF52317">
    <property type="entry name" value="Class I glutamine amidotransferase-like"/>
    <property type="match status" value="1"/>
</dbReference>
<dbReference type="SUPFAM" id="SSF52540">
    <property type="entry name" value="P-loop containing nucleoside triphosphate hydrolases"/>
    <property type="match status" value="1"/>
</dbReference>
<dbReference type="PROSITE" id="PS51274">
    <property type="entry name" value="GATASE_COBBQ"/>
    <property type="match status" value="1"/>
</dbReference>
<feature type="chain" id="PRO_1000201972" description="Probable cobyric acid synthase">
    <location>
        <begin position="1"/>
        <end position="483"/>
    </location>
</feature>
<feature type="domain" description="GATase cobBQ-type" evidence="1">
    <location>
        <begin position="247"/>
        <end position="433"/>
    </location>
</feature>
<feature type="active site" description="Nucleophile" evidence="1">
    <location>
        <position position="325"/>
    </location>
</feature>
<feature type="active site" evidence="1">
    <location>
        <position position="425"/>
    </location>
</feature>
<organism>
    <name type="scientific">Thermococcus gammatolerans (strain DSM 15229 / JCM 11827 / EJ3)</name>
    <dbReference type="NCBI Taxonomy" id="593117"/>
    <lineage>
        <taxon>Archaea</taxon>
        <taxon>Methanobacteriati</taxon>
        <taxon>Methanobacteriota</taxon>
        <taxon>Thermococci</taxon>
        <taxon>Thermococcales</taxon>
        <taxon>Thermococcaceae</taxon>
        <taxon>Thermococcus</taxon>
    </lineage>
</organism>
<sequence length="483" mass="54069">MGKALMVLGTSSGAGKSLLVTALCRIFSNLGYDVVPFKSQNMSLNSAPSIEGGEISRAQYLQAIACRKKPSVRFNPILLKPEGNMRSQVIFMGKPIGSVSAKDYMLSRKEELFRKAMKVLDELKERHDLVIIEGAGSPVEINLKDYDIANTRVMLHAKAKGILVTDIDRGGSFASIVGTMELLKPEERDTIIGFVFNKFRGDKSLLEPGFEYLEKRYGKPTLGVIPYVEHRLPEEDSLAEFPKVKGELHIQIIKLPHISNFTDFEPLHWANGVDYVTRPEELKGDVIIIPGSKNTVEDLLWLRENGFEDAIIEAHREGSFVVGICGGFQMLGEKIIDTVESKRGEVKGIGLLPAKTVFEKTKRTNHLNAEVLWEPARGMAVEGYEIRFGRSVSERPFSVIKAINGAKTFEPEGAIGERAFGTYLHGIFHNFAFTERFLNFLRVEKGLEPVSIERWSIEEEIERFAKLVEENIDVERILGELGL</sequence>
<gene>
    <name evidence="1" type="primary">cobQ</name>
    <name type="ordered locus">TGAM_0535</name>
</gene>
<reference key="1">
    <citation type="journal article" date="2007" name="Genome Biol.">
        <title>Genome analysis and genome-wide proteomics of Thermococcus gammatolerans, the most radioresistant organism known amongst the Archaea.</title>
        <authorList>
            <person name="Zivanovic Y."/>
            <person name="Armengaud J."/>
            <person name="Lagorce A."/>
            <person name="Leplat C."/>
            <person name="Guerin P."/>
            <person name="Dutertre M."/>
            <person name="Anthouard V."/>
            <person name="Forterre P."/>
            <person name="Wincker P."/>
            <person name="Confalonieri F."/>
        </authorList>
    </citation>
    <scope>NUCLEOTIDE SEQUENCE [LARGE SCALE GENOMIC DNA]</scope>
    <source>
        <strain>DSM 15229 / JCM 11827 / EJ3</strain>
    </source>
</reference>
<evidence type="ECO:0000255" key="1">
    <source>
        <dbReference type="HAMAP-Rule" id="MF_00028"/>
    </source>
</evidence>
<name>COBQ_THEGJ</name>
<keyword id="KW-0169">Cobalamin biosynthesis</keyword>
<keyword id="KW-0315">Glutamine amidotransferase</keyword>
<keyword id="KW-1185">Reference proteome</keyword>